<accession>Q5CZZ9</accession>
<evidence type="ECO:0000250" key="1"/>
<evidence type="ECO:0000250" key="2">
    <source>
        <dbReference type="UniProtKB" id="P70181"/>
    </source>
</evidence>
<evidence type="ECO:0000250" key="3">
    <source>
        <dbReference type="UniProtKB" id="Q99755"/>
    </source>
</evidence>
<evidence type="ECO:0000255" key="4">
    <source>
        <dbReference type="PROSITE-ProRule" id="PRU00781"/>
    </source>
</evidence>
<evidence type="ECO:0000256" key="5">
    <source>
        <dbReference type="SAM" id="MobiDB-lite"/>
    </source>
</evidence>
<evidence type="ECO:0000305" key="6"/>
<evidence type="ECO:0000312" key="7">
    <source>
        <dbReference type="EMBL" id="AAH90349.1"/>
    </source>
</evidence>
<evidence type="ECO:0000312" key="8">
    <source>
        <dbReference type="RGD" id="1310914"/>
    </source>
</evidence>
<evidence type="ECO:0007744" key="9">
    <source>
    </source>
</evidence>
<protein>
    <recommendedName>
        <fullName evidence="2">Phosphatidylinositol 4-phosphate 5-kinase type-1 beta</fullName>
        <shortName evidence="2">PIP5K1-beta</shortName>
        <shortName evidence="2">PtdIns(4)P-5-kinase 1 beta</shortName>
        <ecNumber evidence="2">2.7.1.68</ecNumber>
    </recommendedName>
    <alternativeName>
        <fullName evidence="7">Phosphatidylinositol 4-phosphate 5-kinase type I alpha</fullName>
        <shortName evidence="7">PIP5KIalpha</shortName>
    </alternativeName>
    <alternativeName>
        <fullName evidence="2">Phosphatidylinositol 4-phosphate 5-kinase type I beta</fullName>
        <shortName evidence="2">PIP5KIbeta</shortName>
    </alternativeName>
</protein>
<proteinExistence type="evidence at protein level"/>
<gene>
    <name evidence="8" type="primary">Pip5k1b</name>
</gene>
<dbReference type="EC" id="2.7.1.68" evidence="2"/>
<dbReference type="EMBL" id="BC090349">
    <property type="protein sequence ID" value="AAH90349.1"/>
    <property type="molecule type" value="mRNA"/>
</dbReference>
<dbReference type="RefSeq" id="NP_001012761.1">
    <property type="nucleotide sequence ID" value="NM_001012743.1"/>
</dbReference>
<dbReference type="RefSeq" id="XP_017444762.1">
    <property type="nucleotide sequence ID" value="XM_017589273.1"/>
</dbReference>
<dbReference type="RefSeq" id="XP_063120793.1">
    <property type="nucleotide sequence ID" value="XM_063264723.1"/>
</dbReference>
<dbReference type="SMR" id="Q5CZZ9"/>
<dbReference type="FunCoup" id="Q5CZZ9">
    <property type="interactions" value="1787"/>
</dbReference>
<dbReference type="STRING" id="10116.ENSRNOP00000063506"/>
<dbReference type="iPTMnet" id="Q5CZZ9"/>
<dbReference type="PhosphoSitePlus" id="Q5CZZ9"/>
<dbReference type="PaxDb" id="10116-ENSRNOP00000063506"/>
<dbReference type="GeneID" id="309419"/>
<dbReference type="KEGG" id="rno:309419"/>
<dbReference type="AGR" id="RGD:1310914"/>
<dbReference type="CTD" id="8395"/>
<dbReference type="RGD" id="1310914">
    <property type="gene designation" value="Pip5k1b"/>
</dbReference>
<dbReference type="VEuPathDB" id="HostDB:ENSRNOG00000015232"/>
<dbReference type="eggNOG" id="KOG0229">
    <property type="taxonomic scope" value="Eukaryota"/>
</dbReference>
<dbReference type="InParanoid" id="Q5CZZ9"/>
<dbReference type="OrthoDB" id="70770at2759"/>
<dbReference type="PhylomeDB" id="Q5CZZ9"/>
<dbReference type="TreeFam" id="TF319618"/>
<dbReference type="Reactome" id="R-RNO-1660499">
    <property type="pathway name" value="Synthesis of PIPs at the plasma membrane"/>
</dbReference>
<dbReference type="Reactome" id="R-RNO-201688">
    <property type="pathway name" value="WNT mediated activation of DVL"/>
</dbReference>
<dbReference type="Reactome" id="R-RNO-6811558">
    <property type="pathway name" value="PI5P, PP2A and IER3 Regulate PI3K/AKT Signaling"/>
</dbReference>
<dbReference type="PRO" id="PR:Q5CZZ9"/>
<dbReference type="Proteomes" id="UP000002494">
    <property type="component" value="Chromosome 1"/>
</dbReference>
<dbReference type="Bgee" id="ENSRNOG00000015232">
    <property type="expression patterns" value="Expressed in jejunum and 17 other cell types or tissues"/>
</dbReference>
<dbReference type="ExpressionAtlas" id="Q5CZZ9">
    <property type="expression patterns" value="baseline and differential"/>
</dbReference>
<dbReference type="GO" id="GO:0005829">
    <property type="term" value="C:cytosol"/>
    <property type="evidence" value="ECO:0000266"/>
    <property type="project" value="RGD"/>
</dbReference>
<dbReference type="GO" id="GO:0012505">
    <property type="term" value="C:endomembrane system"/>
    <property type="evidence" value="ECO:0007669"/>
    <property type="project" value="UniProtKB-SubCell"/>
</dbReference>
<dbReference type="GO" id="GO:0005886">
    <property type="term" value="C:plasma membrane"/>
    <property type="evidence" value="ECO:0000318"/>
    <property type="project" value="GO_Central"/>
</dbReference>
<dbReference type="GO" id="GO:0001931">
    <property type="term" value="C:uropod"/>
    <property type="evidence" value="ECO:0000266"/>
    <property type="project" value="RGD"/>
</dbReference>
<dbReference type="GO" id="GO:0016308">
    <property type="term" value="F:1-phosphatidylinositol-4-phosphate 5-kinase activity"/>
    <property type="evidence" value="ECO:0000250"/>
    <property type="project" value="UniProtKB"/>
</dbReference>
<dbReference type="GO" id="GO:0005524">
    <property type="term" value="F:ATP binding"/>
    <property type="evidence" value="ECO:0007669"/>
    <property type="project" value="UniProtKB-KW"/>
</dbReference>
<dbReference type="GO" id="GO:0006661">
    <property type="term" value="P:phosphatidylinositol biosynthetic process"/>
    <property type="evidence" value="ECO:0000266"/>
    <property type="project" value="RGD"/>
</dbReference>
<dbReference type="GO" id="GO:0046488">
    <property type="term" value="P:phosphatidylinositol metabolic process"/>
    <property type="evidence" value="ECO:0000266"/>
    <property type="project" value="RGD"/>
</dbReference>
<dbReference type="GO" id="GO:0046854">
    <property type="term" value="P:phosphatidylinositol phosphate biosynthetic process"/>
    <property type="evidence" value="ECO:0000318"/>
    <property type="project" value="GO_Central"/>
</dbReference>
<dbReference type="CDD" id="cd17307">
    <property type="entry name" value="PIPKc_PIP5K1B"/>
    <property type="match status" value="1"/>
</dbReference>
<dbReference type="FunFam" id="3.30.800.10:FF:000001">
    <property type="entry name" value="phosphatidylinositol 4-phosphate 5-kinase type-1 gamma"/>
    <property type="match status" value="1"/>
</dbReference>
<dbReference type="Gene3D" id="3.30.810.10">
    <property type="entry name" value="2-Layer Sandwich"/>
    <property type="match status" value="1"/>
</dbReference>
<dbReference type="Gene3D" id="3.30.800.10">
    <property type="entry name" value="Phosphatidylinositol Phosphate Kinase II Beta"/>
    <property type="match status" value="1"/>
</dbReference>
<dbReference type="InterPro" id="IPR027483">
    <property type="entry name" value="PInositol-4-P-4/5-kinase_C_sf"/>
</dbReference>
<dbReference type="InterPro" id="IPR002498">
    <property type="entry name" value="PInositol-4-P-4/5-kinase_core"/>
</dbReference>
<dbReference type="InterPro" id="IPR027484">
    <property type="entry name" value="PInositol-4-P-5-kinase_N"/>
</dbReference>
<dbReference type="InterPro" id="IPR023610">
    <property type="entry name" value="PInositol-4/5-P-5/4-kinase"/>
</dbReference>
<dbReference type="PANTHER" id="PTHR23086:SF34">
    <property type="entry name" value="PHOSPHATIDYLINOSITOL 4-PHOSPHATE 5-KINASE TYPE-1 BETA"/>
    <property type="match status" value="1"/>
</dbReference>
<dbReference type="PANTHER" id="PTHR23086">
    <property type="entry name" value="PHOSPHATIDYLINOSITOL-4-PHOSPHATE 5-KINASE"/>
    <property type="match status" value="1"/>
</dbReference>
<dbReference type="Pfam" id="PF01504">
    <property type="entry name" value="PIP5K"/>
    <property type="match status" value="1"/>
</dbReference>
<dbReference type="SMART" id="SM00330">
    <property type="entry name" value="PIPKc"/>
    <property type="match status" value="1"/>
</dbReference>
<dbReference type="SUPFAM" id="SSF56104">
    <property type="entry name" value="SAICAR synthase-like"/>
    <property type="match status" value="1"/>
</dbReference>
<dbReference type="PROSITE" id="PS51455">
    <property type="entry name" value="PIPK"/>
    <property type="match status" value="1"/>
</dbReference>
<keyword id="KW-0067">ATP-binding</keyword>
<keyword id="KW-1003">Cell membrane</keyword>
<keyword id="KW-0963">Cytoplasm</keyword>
<keyword id="KW-0418">Kinase</keyword>
<keyword id="KW-0443">Lipid metabolism</keyword>
<keyword id="KW-0472">Membrane</keyword>
<keyword id="KW-0547">Nucleotide-binding</keyword>
<keyword id="KW-0597">Phosphoprotein</keyword>
<keyword id="KW-1185">Reference proteome</keyword>
<keyword id="KW-0808">Transferase</keyword>
<name>PI51B_RAT</name>
<reference key="1">
    <citation type="journal article" date="2004" name="Genome Res.">
        <title>The status, quality, and expansion of the NIH full-length cDNA project: the Mammalian Gene Collection (MGC).</title>
        <authorList>
            <consortium name="The MGC Project Team"/>
        </authorList>
    </citation>
    <scope>NUCLEOTIDE SEQUENCE [LARGE SCALE MRNA]</scope>
    <source>
        <tissue>Brain</tissue>
    </source>
</reference>
<reference key="2">
    <citation type="journal article" date="2012" name="Nat. Commun.">
        <title>Quantitative maps of protein phosphorylation sites across 14 different rat organs and tissues.</title>
        <authorList>
            <person name="Lundby A."/>
            <person name="Secher A."/>
            <person name="Lage K."/>
            <person name="Nordsborg N.B."/>
            <person name="Dmytriyev A."/>
            <person name="Lundby C."/>
            <person name="Olsen J.V."/>
        </authorList>
    </citation>
    <scope>PHOSPHORYLATION [LARGE SCALE ANALYSIS] AT SER-445 AND SER-448</scope>
    <scope>IDENTIFICATION BY MASS SPECTROMETRY [LARGE SCALE ANALYSIS]</scope>
</reference>
<feature type="chain" id="PRO_0000185460" description="Phosphatidylinositol 4-phosphate 5-kinase type-1 beta">
    <location>
        <begin position="1"/>
        <end position="539"/>
    </location>
</feature>
<feature type="domain" description="PIPK" evidence="4">
    <location>
        <begin position="25"/>
        <end position="395"/>
    </location>
</feature>
<feature type="region of interest" description="Disordered" evidence="5">
    <location>
        <begin position="1"/>
        <end position="21"/>
    </location>
</feature>
<feature type="modified residue" description="Phosphoserine" evidence="9">
    <location>
        <position position="445"/>
    </location>
</feature>
<feature type="modified residue" description="Phosphoserine" evidence="2">
    <location>
        <position position="447"/>
    </location>
</feature>
<feature type="modified residue" description="Phosphoserine" evidence="9">
    <location>
        <position position="448"/>
    </location>
</feature>
<comment type="function">
    <text evidence="2 3">Catalyzes the phosphorylation of phosphatidylinositol 4-phosphate (PtdIns(4)P/PI4P) to form phosphatidylinositol 4,5-bisphosphate (PtdIns(4,5)P2/PIP2), a lipid second messenger that regulates several cellular processes such as signal transduction, vesicle trafficking, actin cytoskeleton dynamics, cell adhesion, and cell motility (By similarity). PtdIns(4,5)P2 can directly act as a second messenger or can be utilized as a precursor to generate other second messengers: inositol 1,4,5-trisphosphate (IP3), diacylglycerol (DAG) or phosphatidylinositol-3,4,5-trisphosphate (PtdIns(3,4,5)P3/PIP3) (By similarity). Mediates RAC1-dependent reorganization of actin filaments. Contributes to the activation of phospholipase PLD2. Together with PIP5K1A, is required, after stimulation by G-protein coupled receptors, for the synthesis of IP3 that will induce stable platelet adhesion (By similarity).</text>
</comment>
<comment type="catalytic activity">
    <reaction evidence="2">
        <text>a 1,2-diacyl-sn-glycero-3-phospho-(1D-myo-inositol 4-phosphate) + ATP = a 1,2-diacyl-sn-glycero-3-phospho-(1D-myo-inositol-4,5-bisphosphate) + ADP + H(+)</text>
        <dbReference type="Rhea" id="RHEA:14425"/>
        <dbReference type="ChEBI" id="CHEBI:15378"/>
        <dbReference type="ChEBI" id="CHEBI:30616"/>
        <dbReference type="ChEBI" id="CHEBI:58178"/>
        <dbReference type="ChEBI" id="CHEBI:58456"/>
        <dbReference type="ChEBI" id="CHEBI:456216"/>
        <dbReference type="EC" id="2.7.1.68"/>
    </reaction>
    <physiologicalReaction direction="left-to-right" evidence="2">
        <dbReference type="Rhea" id="RHEA:14426"/>
    </physiologicalReaction>
</comment>
<comment type="catalytic activity">
    <reaction evidence="2">
        <text>1-octadecanoyl-2-(5Z,8Z,11Z,14Z)-eicosatetraenoyl-sn-glycero-3-phospho-1D-myo-inositol 4-phosphate + ATP = 1-octadecanoyl-2-(5Z,8Z,11Z,14Z)-eicosatetraenoyl-sn-glycero-3-phospho-1D-myo-inositol 4,5-bisphosphate + ADP + H(+)</text>
        <dbReference type="Rhea" id="RHEA:40363"/>
        <dbReference type="ChEBI" id="CHEBI:15378"/>
        <dbReference type="ChEBI" id="CHEBI:30616"/>
        <dbReference type="ChEBI" id="CHEBI:77136"/>
        <dbReference type="ChEBI" id="CHEBI:77137"/>
        <dbReference type="ChEBI" id="CHEBI:456216"/>
    </reaction>
    <physiologicalReaction direction="left-to-right" evidence="2">
        <dbReference type="Rhea" id="RHEA:40364"/>
    </physiologicalReaction>
</comment>
<comment type="catalytic activity">
    <reaction evidence="2">
        <text>1-octadecanoyl-2-(9Z)-octadecenoyl-sn-glycero-3-phospho-1D-myo-inositol 4-phosphate + ATP = 1-octadecanoyl-2-(9Z)-octadecenoyl-sn-glycero-3-phospho-1D-myo-inositol 4,5-bisphosphate + ADP + H(+)</text>
        <dbReference type="Rhea" id="RHEA:40367"/>
        <dbReference type="ChEBI" id="CHEBI:15378"/>
        <dbReference type="ChEBI" id="CHEBI:30616"/>
        <dbReference type="ChEBI" id="CHEBI:77139"/>
        <dbReference type="ChEBI" id="CHEBI:77140"/>
        <dbReference type="ChEBI" id="CHEBI:456216"/>
    </reaction>
    <physiologicalReaction direction="left-to-right" evidence="2">
        <dbReference type="Rhea" id="RHEA:40368"/>
    </physiologicalReaction>
</comment>
<comment type="catalytic activity">
    <reaction evidence="2">
        <text>1-octadecanoyl-2-(9Z)-octadecenoyl-sn-glycero-3-phospho-1D-myo-inositol + ATP = 1-octadecanoyl-2-(9Z)-octadecenoyl-sn-glycero-3-phospho-1D-myo-inositol 5-phosphate + ADP + H(+)</text>
        <dbReference type="Rhea" id="RHEA:40379"/>
        <dbReference type="ChEBI" id="CHEBI:15378"/>
        <dbReference type="ChEBI" id="CHEBI:30616"/>
        <dbReference type="ChEBI" id="CHEBI:77163"/>
        <dbReference type="ChEBI" id="CHEBI:77164"/>
        <dbReference type="ChEBI" id="CHEBI:456216"/>
    </reaction>
    <physiologicalReaction direction="left-to-right" evidence="2">
        <dbReference type="Rhea" id="RHEA:40380"/>
    </physiologicalReaction>
</comment>
<comment type="catalytic activity">
    <reaction evidence="2">
        <text>1-octadecanoyl-2-(9Z,12Z)-octadecadienoyl-sn-glycero-3-phospho-1D-myo-inositol + ATP = 1-octadecanoyl-2-(9Z,12Z)-octadecadienoyl-sn-glycero-3-phospho-1D-myo-inositol 5-phosphate + ADP + H(+)</text>
        <dbReference type="Rhea" id="RHEA:40383"/>
        <dbReference type="ChEBI" id="CHEBI:15378"/>
        <dbReference type="ChEBI" id="CHEBI:30616"/>
        <dbReference type="ChEBI" id="CHEBI:77158"/>
        <dbReference type="ChEBI" id="CHEBI:77159"/>
        <dbReference type="ChEBI" id="CHEBI:456216"/>
    </reaction>
    <physiologicalReaction direction="left-to-right" evidence="2">
        <dbReference type="Rhea" id="RHEA:40384"/>
    </physiologicalReaction>
</comment>
<comment type="catalytic activity">
    <reaction evidence="2">
        <text>1-octadecanoyl-2-(5Z,8Z,11Z,14Z-eicosatetraenoyl)-sn-glycero-3-phospho-(1D-myo-inositol) + ATP = 1-octadecanoyl-2-(5Z,8Z,11Z,14Z)-eicosatetraenoyl-sn-glycero-3-phospho-1D-myo-inositol 5-phosphate + ADP + H(+)</text>
        <dbReference type="Rhea" id="RHEA:40375"/>
        <dbReference type="ChEBI" id="CHEBI:15378"/>
        <dbReference type="ChEBI" id="CHEBI:30616"/>
        <dbReference type="ChEBI" id="CHEBI:77160"/>
        <dbReference type="ChEBI" id="CHEBI:133606"/>
        <dbReference type="ChEBI" id="CHEBI:456216"/>
    </reaction>
    <physiologicalReaction direction="left-to-right" evidence="2">
        <dbReference type="Rhea" id="RHEA:40376"/>
    </physiologicalReaction>
</comment>
<comment type="catalytic activity">
    <reaction evidence="2">
        <text>1,2-di-(9Z,12Z)-octadecadienoyl-sn-glycero-3-phospho-1D-myo-inositol + ATP = 1,2-di(9Z,12Z)-octadecadienoyl-sn-glycero-3-phospho-1D-myo-inositol 5-phosphate + ADP + H(+)</text>
        <dbReference type="Rhea" id="RHEA:40387"/>
        <dbReference type="ChEBI" id="CHEBI:15378"/>
        <dbReference type="ChEBI" id="CHEBI:30616"/>
        <dbReference type="ChEBI" id="CHEBI:77165"/>
        <dbReference type="ChEBI" id="CHEBI:77167"/>
        <dbReference type="ChEBI" id="CHEBI:456216"/>
    </reaction>
    <physiologicalReaction direction="left-to-right" evidence="2">
        <dbReference type="Rhea" id="RHEA:40388"/>
    </physiologicalReaction>
</comment>
<comment type="subunit">
    <text evidence="2">Interacts with RAC1, AJUBA, PLD1, PLD2 and ARF1.</text>
</comment>
<comment type="subcellular location">
    <subcellularLocation>
        <location evidence="2">Cytoplasm</location>
        <location evidence="2">Cytosol</location>
    </subcellularLocation>
    <subcellularLocation>
        <location evidence="2">Cell membrane</location>
    </subcellularLocation>
    <subcellularLocation>
        <location>Endomembrane system</location>
    </subcellularLocation>
    <text evidence="1">Associated with membranes.</text>
</comment>
<comment type="caution">
    <text evidence="6">There is confusion in the literature with phosphatidylinositol 4-phosphate 5-kinase type I nomenclature due to the fact that frequently mouse PIP5K1B is named Phosphatidylinositol 4-phosphate 5-kinase type I alpha.</text>
</comment>
<sequence>MSSTAENGDAVPGKQNEEKTYKKTASSAIKGAIQLGIGYTVGNLTSKPERDVLMQDFYVVESVFLPSEGSNLTPAHHYPDFRFKTYAPLAFRYFRELFGIKPDDYLYSICSEPLIELSNPGASGSLFFLTSDDEFIIKTVQHKEAEFLQKLLPGYYMNLNQNPRTLLPKFYGLYCMQSGGINIRIVVMNNVLPRAMRMHLTYDLKGSTYKRRASRKEREKPNPTFKDLDFLQDMHEGLYFDTETYNALMKTLQRDCRVLESFKIMDYSLLLGIHILDHSLKDKEEEPLQNAPDAKRPGMQKVLYSTAMESIQGPGKSADGIIAENPDTMGGIPAKSHKGEKLLLFMGIIDILQSYRLMKKLEHSWKALVYDGDTVSVHRPSFYADRFLKFMNSRVFKKIQALKASPSKKRCNSIAALKATSQEILSSISQEWKDEKQDLLTEGQSFSSLDEEALGSRHRPDLVPSTPSLFEAASLATTISSSSLYVGEHYPHDRTTLYSNSKGLPSSSTFTLEEGTIYLTAEPNALETQDDASVLDVYL</sequence>
<organism>
    <name type="scientific">Rattus norvegicus</name>
    <name type="common">Rat</name>
    <dbReference type="NCBI Taxonomy" id="10116"/>
    <lineage>
        <taxon>Eukaryota</taxon>
        <taxon>Metazoa</taxon>
        <taxon>Chordata</taxon>
        <taxon>Craniata</taxon>
        <taxon>Vertebrata</taxon>
        <taxon>Euteleostomi</taxon>
        <taxon>Mammalia</taxon>
        <taxon>Eutheria</taxon>
        <taxon>Euarchontoglires</taxon>
        <taxon>Glires</taxon>
        <taxon>Rodentia</taxon>
        <taxon>Myomorpha</taxon>
        <taxon>Muroidea</taxon>
        <taxon>Muridae</taxon>
        <taxon>Murinae</taxon>
        <taxon>Rattus</taxon>
    </lineage>
</organism>